<dbReference type="EC" id="4.6.1.17" evidence="1"/>
<dbReference type="EMBL" id="AE000513">
    <property type="protein sequence ID" value="AAF12111.1"/>
    <property type="molecule type" value="Genomic_DNA"/>
</dbReference>
<dbReference type="PIR" id="E75257">
    <property type="entry name" value="E75257"/>
</dbReference>
<dbReference type="RefSeq" id="NP_296291.1">
    <property type="nucleotide sequence ID" value="NC_001263.1"/>
</dbReference>
<dbReference type="RefSeq" id="WP_010889196.1">
    <property type="nucleotide sequence ID" value="NC_001263.1"/>
</dbReference>
<dbReference type="SMR" id="Q9RRC1"/>
<dbReference type="FunCoup" id="Q9RRC1">
    <property type="interactions" value="338"/>
</dbReference>
<dbReference type="STRING" id="243230.DR_2571"/>
<dbReference type="PaxDb" id="243230-DR_2571"/>
<dbReference type="EnsemblBacteria" id="AAF12111">
    <property type="protein sequence ID" value="AAF12111"/>
    <property type="gene ID" value="DR_2571"/>
</dbReference>
<dbReference type="GeneID" id="69518823"/>
<dbReference type="KEGG" id="dra:DR_2571"/>
<dbReference type="PATRIC" id="fig|243230.17.peg.2816"/>
<dbReference type="eggNOG" id="COG0315">
    <property type="taxonomic scope" value="Bacteria"/>
</dbReference>
<dbReference type="HOGENOM" id="CLU_074693_1_1_0"/>
<dbReference type="InParanoid" id="Q9RRC1"/>
<dbReference type="OrthoDB" id="9794429at2"/>
<dbReference type="UniPathway" id="UPA00344"/>
<dbReference type="Proteomes" id="UP000002524">
    <property type="component" value="Chromosome 1"/>
</dbReference>
<dbReference type="GO" id="GO:0061799">
    <property type="term" value="F:cyclic pyranopterin monophosphate synthase activity"/>
    <property type="evidence" value="ECO:0007669"/>
    <property type="project" value="UniProtKB-UniRule"/>
</dbReference>
<dbReference type="GO" id="GO:0006777">
    <property type="term" value="P:Mo-molybdopterin cofactor biosynthetic process"/>
    <property type="evidence" value="ECO:0007669"/>
    <property type="project" value="UniProtKB-UniRule"/>
</dbReference>
<dbReference type="CDD" id="cd01420">
    <property type="entry name" value="MoaC_PE"/>
    <property type="match status" value="1"/>
</dbReference>
<dbReference type="Gene3D" id="3.30.70.640">
    <property type="entry name" value="Molybdopterin cofactor biosynthesis C (MoaC) domain"/>
    <property type="match status" value="1"/>
</dbReference>
<dbReference type="HAMAP" id="MF_01224_B">
    <property type="entry name" value="MoaC_B"/>
    <property type="match status" value="1"/>
</dbReference>
<dbReference type="InterPro" id="IPR023045">
    <property type="entry name" value="MoaC"/>
</dbReference>
<dbReference type="InterPro" id="IPR047594">
    <property type="entry name" value="MoaC_bact/euk"/>
</dbReference>
<dbReference type="InterPro" id="IPR036522">
    <property type="entry name" value="MoaC_sf"/>
</dbReference>
<dbReference type="InterPro" id="IPR050105">
    <property type="entry name" value="MoCo_biosynth_MoaA/MoaC"/>
</dbReference>
<dbReference type="InterPro" id="IPR002820">
    <property type="entry name" value="Mopterin_CF_biosynth-C_dom"/>
</dbReference>
<dbReference type="NCBIfam" id="TIGR00581">
    <property type="entry name" value="moaC"/>
    <property type="match status" value="1"/>
</dbReference>
<dbReference type="NCBIfam" id="NF006870">
    <property type="entry name" value="PRK09364.1"/>
    <property type="match status" value="1"/>
</dbReference>
<dbReference type="PANTHER" id="PTHR22960">
    <property type="entry name" value="MOLYBDOPTERIN COFACTOR SYNTHESIS PROTEIN A"/>
    <property type="match status" value="1"/>
</dbReference>
<dbReference type="Pfam" id="PF01967">
    <property type="entry name" value="MoaC"/>
    <property type="match status" value="1"/>
</dbReference>
<dbReference type="SUPFAM" id="SSF55040">
    <property type="entry name" value="Molybdenum cofactor biosynthesis protein C, MoaC"/>
    <property type="match status" value="1"/>
</dbReference>
<feature type="chain" id="PRO_0000097797" description="Cyclic pyranopterin monophosphate synthase">
    <location>
        <begin position="1"/>
        <end position="168"/>
    </location>
</feature>
<feature type="active site" evidence="1">
    <location>
        <position position="132"/>
    </location>
</feature>
<feature type="binding site" evidence="1">
    <location>
        <begin position="81"/>
        <end position="83"/>
    </location>
    <ligand>
        <name>substrate</name>
    </ligand>
</feature>
<feature type="binding site" evidence="1">
    <location>
        <begin position="117"/>
        <end position="118"/>
    </location>
    <ligand>
        <name>substrate</name>
    </ligand>
</feature>
<name>MOAC_DEIRA</name>
<gene>
    <name evidence="1" type="primary">moaC</name>
    <name type="ordered locus">DR_2571</name>
</gene>
<comment type="function">
    <text evidence="1">Catalyzes the conversion of (8S)-3',8-cyclo-7,8-dihydroguanosine 5'-triphosphate to cyclic pyranopterin monophosphate (cPMP).</text>
</comment>
<comment type="catalytic activity">
    <reaction evidence="1">
        <text>(8S)-3',8-cyclo-7,8-dihydroguanosine 5'-triphosphate = cyclic pyranopterin phosphate + diphosphate</text>
        <dbReference type="Rhea" id="RHEA:49580"/>
        <dbReference type="ChEBI" id="CHEBI:33019"/>
        <dbReference type="ChEBI" id="CHEBI:59648"/>
        <dbReference type="ChEBI" id="CHEBI:131766"/>
        <dbReference type="EC" id="4.6.1.17"/>
    </reaction>
</comment>
<comment type="pathway">
    <text evidence="1">Cofactor biosynthesis; molybdopterin biosynthesis.</text>
</comment>
<comment type="subunit">
    <text evidence="1">Homohexamer; trimer of dimers.</text>
</comment>
<comment type="similarity">
    <text evidence="1">Belongs to the MoaC family.</text>
</comment>
<sequence>MSDPQGDAPQLTHFVGGQPRMVDVSAKAPTTRTARAEAWVLLPPESRAALLAGQTPKGDPLSVARLAGLAGSKRTADLIFLCHPIPVTSAEVDVTLKDAGIHITALVKTTAPTGVEMEALTAVTVAALNVYDMLKATSKAIEVSGVRLLSKTGGKSGDYQAAERPPQP</sequence>
<keyword id="KW-0456">Lyase</keyword>
<keyword id="KW-0501">Molybdenum cofactor biosynthesis</keyword>
<keyword id="KW-1185">Reference proteome</keyword>
<accession>Q9RRC1</accession>
<reference key="1">
    <citation type="journal article" date="1999" name="Science">
        <title>Genome sequence of the radioresistant bacterium Deinococcus radiodurans R1.</title>
        <authorList>
            <person name="White O."/>
            <person name="Eisen J.A."/>
            <person name="Heidelberg J.F."/>
            <person name="Hickey E.K."/>
            <person name="Peterson J.D."/>
            <person name="Dodson R.J."/>
            <person name="Haft D.H."/>
            <person name="Gwinn M.L."/>
            <person name="Nelson W.C."/>
            <person name="Richardson D.L."/>
            <person name="Moffat K.S."/>
            <person name="Qin H."/>
            <person name="Jiang L."/>
            <person name="Pamphile W."/>
            <person name="Crosby M."/>
            <person name="Shen M."/>
            <person name="Vamathevan J.J."/>
            <person name="Lam P."/>
            <person name="McDonald L.A."/>
            <person name="Utterback T.R."/>
            <person name="Zalewski C."/>
            <person name="Makarova K.S."/>
            <person name="Aravind L."/>
            <person name="Daly M.J."/>
            <person name="Minton K.W."/>
            <person name="Fleischmann R.D."/>
            <person name="Ketchum K.A."/>
            <person name="Nelson K.E."/>
            <person name="Salzberg S.L."/>
            <person name="Smith H.O."/>
            <person name="Venter J.C."/>
            <person name="Fraser C.M."/>
        </authorList>
    </citation>
    <scope>NUCLEOTIDE SEQUENCE [LARGE SCALE GENOMIC DNA]</scope>
    <source>
        <strain>ATCC 13939 / DSM 20539 / JCM 16871 / CCUG 27074 / LMG 4051 / NBRC 15346 / NCIMB 9279 / VKM B-1422 / R1</strain>
    </source>
</reference>
<evidence type="ECO:0000255" key="1">
    <source>
        <dbReference type="HAMAP-Rule" id="MF_01224"/>
    </source>
</evidence>
<protein>
    <recommendedName>
        <fullName evidence="1">Cyclic pyranopterin monophosphate synthase</fullName>
        <ecNumber evidence="1">4.6.1.17</ecNumber>
    </recommendedName>
    <alternativeName>
        <fullName evidence="1">Molybdenum cofactor biosynthesis protein C</fullName>
    </alternativeName>
</protein>
<organism>
    <name type="scientific">Deinococcus radiodurans (strain ATCC 13939 / DSM 20539 / JCM 16871 / CCUG 27074 / LMG 4051 / NBRC 15346 / NCIMB 9279 / VKM B-1422 / R1)</name>
    <dbReference type="NCBI Taxonomy" id="243230"/>
    <lineage>
        <taxon>Bacteria</taxon>
        <taxon>Thermotogati</taxon>
        <taxon>Deinococcota</taxon>
        <taxon>Deinococci</taxon>
        <taxon>Deinococcales</taxon>
        <taxon>Deinococcaceae</taxon>
        <taxon>Deinococcus</taxon>
    </lineage>
</organism>
<proteinExistence type="inferred from homology"/>